<accession>B4HY03</accession>
<protein>
    <recommendedName>
        <fullName evidence="1">Interference hedgehog</fullName>
    </recommendedName>
</protein>
<evidence type="ECO:0000250" key="1">
    <source>
        <dbReference type="UniProtKB" id="Q9VM64"/>
    </source>
</evidence>
<evidence type="ECO:0000255" key="2"/>
<evidence type="ECO:0000255" key="3">
    <source>
        <dbReference type="PROSITE-ProRule" id="PRU00114"/>
    </source>
</evidence>
<evidence type="ECO:0000255" key="4">
    <source>
        <dbReference type="PROSITE-ProRule" id="PRU00316"/>
    </source>
</evidence>
<evidence type="ECO:0000256" key="5">
    <source>
        <dbReference type="SAM" id="MobiDB-lite"/>
    </source>
</evidence>
<evidence type="ECO:0000305" key="6"/>
<evidence type="ECO:0000312" key="7">
    <source>
        <dbReference type="EMBL" id="EDW51933.1"/>
    </source>
</evidence>
<sequence>MTLLTSSLLLFSLLTSRLEAIPVLEKSPAHPAHSAHTAHPAHPSPGVRILRAPESLVAPLGDEVVLECETSLQPERFEWSHRSSRSPGAGFKYLRTGTAKANVSQEAAISRLRVLVRPDTLGEYRCVGWFGPLVVTSTTARLELASTSLVDAQESEAPLQWRVSAGNSVLWSCGQQVQSNPSASWSYFRNGVEIKPEFIGTNGNLFLSNVSSESSGIYSCQATNPASGERIQLPGSMQLQVTPEQRSQSKSPHLLKGQPSSQEITIREGSSLLLQCPGVGSPPPTVVWSSPDVVGAVKNKRSKVFGHALEISNTRVHDAGTYICFQDNGVRPALEHYIKVHVEQPPQIVRPPWADLTNEGDRLKLECEATGVPTPEIYWLLNGHSSVDDTEAELSNNFLILHSVLKRHAGYVQCFARNRLGEHSAGTLLQVNPKQIQEPRESGGTHRPKPNQGSKQKQMYPPTPPNVTRLSDESVMLRWMVPRNGGLPIVIFKVQYRMVGKRKNWQTTNDNIPYGKPKWNSELGKSFTASVTDLKPEHTYRFRILAVYSNNDNKESNTSAKFYLQPGAALDPMPVPELLEIEEYSETAVVLHWSLASDADEHLITGYYAYYRPSSSAGEYFKATIEGAHARSFKIAPLETATMYEFKLQSFSAVSASEFSALKQGRTQRPKTSTTEEPTLQMGDRDTTTPSHNETFNMSPMLTGTIGGGAVLILLLISTCLCVCRRRTSRSRGNNPNKPRMAELRDDFVPLGNCSPTKQRQRTRHIHITLNPLAQQQQQALEEKNDTDQDAPYYQRPSSYDYDPTLRRMSSSSLRRSQRTLERAGGSNGSNNGNNNNLNQSAEAGAVENPGKPGRVLMKRPRLSSRSENLSSGSLNSVGV</sequence>
<dbReference type="EMBL" id="CH480818">
    <property type="protein sequence ID" value="EDW51933.1"/>
    <property type="molecule type" value="Genomic_DNA"/>
</dbReference>
<dbReference type="SMR" id="B4HY03"/>
<dbReference type="STRING" id="7238.B4HY03"/>
<dbReference type="GlyCosmos" id="B4HY03">
    <property type="glycosylation" value="5 sites, No reported glycans"/>
</dbReference>
<dbReference type="EnsemblMetazoa" id="FBtr0196715">
    <property type="protein sequence ID" value="FBpp0195207"/>
    <property type="gene ID" value="FBgn0168661"/>
</dbReference>
<dbReference type="EnsemblMetazoa" id="XM_002035974.2">
    <property type="protein sequence ID" value="XP_002036010.1"/>
    <property type="gene ID" value="LOC6611469"/>
</dbReference>
<dbReference type="GeneID" id="6611469"/>
<dbReference type="KEGG" id="dse:6611469"/>
<dbReference type="HOGENOM" id="CLU_004633_1_0_1"/>
<dbReference type="OMA" id="CGLMEGK"/>
<dbReference type="OrthoDB" id="52047at7215"/>
<dbReference type="PhylomeDB" id="B4HY03"/>
<dbReference type="Proteomes" id="UP000001292">
    <property type="component" value="Unassembled WGS sequence"/>
</dbReference>
<dbReference type="GO" id="GO:0030424">
    <property type="term" value="C:axon"/>
    <property type="evidence" value="ECO:0007669"/>
    <property type="project" value="TreeGrafter"/>
</dbReference>
<dbReference type="GO" id="GO:0009986">
    <property type="term" value="C:cell surface"/>
    <property type="evidence" value="ECO:0007669"/>
    <property type="project" value="EnsemblMetazoa"/>
</dbReference>
<dbReference type="GO" id="GO:0035230">
    <property type="term" value="C:cytoneme"/>
    <property type="evidence" value="ECO:0007669"/>
    <property type="project" value="EnsemblMetazoa"/>
</dbReference>
<dbReference type="GO" id="GO:0016020">
    <property type="term" value="C:membrane"/>
    <property type="evidence" value="ECO:0000250"/>
    <property type="project" value="UniProtKB"/>
</dbReference>
<dbReference type="GO" id="GO:0005886">
    <property type="term" value="C:plasma membrane"/>
    <property type="evidence" value="ECO:0007669"/>
    <property type="project" value="EnsemblMetazoa"/>
</dbReference>
<dbReference type="GO" id="GO:0015026">
    <property type="term" value="F:coreceptor activity"/>
    <property type="evidence" value="ECO:0007669"/>
    <property type="project" value="EnsemblMetazoa"/>
</dbReference>
<dbReference type="GO" id="GO:0097108">
    <property type="term" value="F:hedgehog family protein binding"/>
    <property type="evidence" value="ECO:0007669"/>
    <property type="project" value="EnsemblMetazoa"/>
</dbReference>
<dbReference type="GO" id="GO:0008201">
    <property type="term" value="F:heparin binding"/>
    <property type="evidence" value="ECO:0000250"/>
    <property type="project" value="UniProtKB"/>
</dbReference>
<dbReference type="GO" id="GO:0005113">
    <property type="term" value="F:patched binding"/>
    <property type="evidence" value="ECO:0007669"/>
    <property type="project" value="EnsemblMetazoa"/>
</dbReference>
<dbReference type="GO" id="GO:0042803">
    <property type="term" value="F:protein homodimerization activity"/>
    <property type="evidence" value="ECO:0000250"/>
    <property type="project" value="UniProtKB"/>
</dbReference>
<dbReference type="GO" id="GO:0007411">
    <property type="term" value="P:axon guidance"/>
    <property type="evidence" value="ECO:0007669"/>
    <property type="project" value="TreeGrafter"/>
</dbReference>
<dbReference type="GO" id="GO:0048749">
    <property type="term" value="P:compound eye development"/>
    <property type="evidence" value="ECO:0007669"/>
    <property type="project" value="EnsemblMetazoa"/>
</dbReference>
<dbReference type="GO" id="GO:0035017">
    <property type="term" value="P:cuticle pattern formation"/>
    <property type="evidence" value="ECO:0007669"/>
    <property type="project" value="EnsemblMetazoa"/>
</dbReference>
<dbReference type="GO" id="GO:0034109">
    <property type="term" value="P:homotypic cell-cell adhesion"/>
    <property type="evidence" value="ECO:0007669"/>
    <property type="project" value="EnsemblMetazoa"/>
</dbReference>
<dbReference type="GO" id="GO:0071694">
    <property type="term" value="P:maintenance of protein location in extracellular region"/>
    <property type="evidence" value="ECO:0007669"/>
    <property type="project" value="EnsemblMetazoa"/>
</dbReference>
<dbReference type="GO" id="GO:0007379">
    <property type="term" value="P:segment specification"/>
    <property type="evidence" value="ECO:0007669"/>
    <property type="project" value="EnsemblMetazoa"/>
</dbReference>
<dbReference type="GO" id="GO:0007224">
    <property type="term" value="P:smoothened signaling pathway"/>
    <property type="evidence" value="ECO:0000250"/>
    <property type="project" value="UniProtKB"/>
</dbReference>
<dbReference type="GO" id="GO:0048100">
    <property type="term" value="P:wing disc anterior/posterior pattern formation"/>
    <property type="evidence" value="ECO:0007669"/>
    <property type="project" value="EnsemblMetazoa"/>
</dbReference>
<dbReference type="CDD" id="cd00063">
    <property type="entry name" value="FN3"/>
    <property type="match status" value="2"/>
</dbReference>
<dbReference type="CDD" id="cd00096">
    <property type="entry name" value="Ig"/>
    <property type="match status" value="1"/>
</dbReference>
<dbReference type="FunFam" id="2.60.40.10:FF:001723">
    <property type="entry name" value="Interference hedgehog"/>
    <property type="match status" value="1"/>
</dbReference>
<dbReference type="FunFam" id="2.60.40.10:FF:001747">
    <property type="entry name" value="Interference hedgehog"/>
    <property type="match status" value="1"/>
</dbReference>
<dbReference type="FunFam" id="2.60.40.10:FF:001773">
    <property type="entry name" value="Interference hedgehog"/>
    <property type="match status" value="1"/>
</dbReference>
<dbReference type="FunFam" id="2.60.40.10:FF:002071">
    <property type="entry name" value="Interference hedgehog"/>
    <property type="match status" value="1"/>
</dbReference>
<dbReference type="FunFam" id="2.60.40.10:FF:002212">
    <property type="entry name" value="Interference hedgehog"/>
    <property type="match status" value="1"/>
</dbReference>
<dbReference type="Gene3D" id="2.60.40.10">
    <property type="entry name" value="Immunoglobulins"/>
    <property type="match status" value="5"/>
</dbReference>
<dbReference type="InterPro" id="IPR003961">
    <property type="entry name" value="FN3_dom"/>
</dbReference>
<dbReference type="InterPro" id="IPR036116">
    <property type="entry name" value="FN3_sf"/>
</dbReference>
<dbReference type="InterPro" id="IPR007110">
    <property type="entry name" value="Ig-like_dom"/>
</dbReference>
<dbReference type="InterPro" id="IPR036179">
    <property type="entry name" value="Ig-like_dom_sf"/>
</dbReference>
<dbReference type="InterPro" id="IPR013783">
    <property type="entry name" value="Ig-like_fold"/>
</dbReference>
<dbReference type="InterPro" id="IPR003599">
    <property type="entry name" value="Ig_sub"/>
</dbReference>
<dbReference type="InterPro" id="IPR003598">
    <property type="entry name" value="Ig_sub2"/>
</dbReference>
<dbReference type="PANTHER" id="PTHR44170:SF33">
    <property type="entry name" value="BROTHER OF IHOG, ISOFORM G-RELATED"/>
    <property type="match status" value="1"/>
</dbReference>
<dbReference type="PANTHER" id="PTHR44170">
    <property type="entry name" value="PROTEIN SIDEKICK"/>
    <property type="match status" value="1"/>
</dbReference>
<dbReference type="Pfam" id="PF00041">
    <property type="entry name" value="fn3"/>
    <property type="match status" value="2"/>
</dbReference>
<dbReference type="Pfam" id="PF13895">
    <property type="entry name" value="Ig_2"/>
    <property type="match status" value="1"/>
</dbReference>
<dbReference type="Pfam" id="PF13927">
    <property type="entry name" value="Ig_3"/>
    <property type="match status" value="2"/>
</dbReference>
<dbReference type="SMART" id="SM00060">
    <property type="entry name" value="FN3"/>
    <property type="match status" value="2"/>
</dbReference>
<dbReference type="SMART" id="SM00409">
    <property type="entry name" value="IG"/>
    <property type="match status" value="4"/>
</dbReference>
<dbReference type="SMART" id="SM00408">
    <property type="entry name" value="IGc2"/>
    <property type="match status" value="3"/>
</dbReference>
<dbReference type="SUPFAM" id="SSF49265">
    <property type="entry name" value="Fibronectin type III"/>
    <property type="match status" value="1"/>
</dbReference>
<dbReference type="SUPFAM" id="SSF48726">
    <property type="entry name" value="Immunoglobulin"/>
    <property type="match status" value="3"/>
</dbReference>
<dbReference type="PROSITE" id="PS50853">
    <property type="entry name" value="FN3"/>
    <property type="match status" value="2"/>
</dbReference>
<dbReference type="PROSITE" id="PS50835">
    <property type="entry name" value="IG_LIKE"/>
    <property type="match status" value="4"/>
</dbReference>
<comment type="function">
    <text evidence="1">Mediates response to the active Hedgehog (Hh) protein signal in embryos, functioning upstream or at the level of patched (ptc).</text>
</comment>
<comment type="subunit">
    <text evidence="1">Homodimer. Heterotetramer; 2 iHog chains bind 2 hh chains when facilitated by heparin, heparin is required to promote high-affinity interactions between hh and iHog (By similarity).</text>
</comment>
<comment type="subcellular location">
    <subcellularLocation>
        <location evidence="2">Membrane</location>
        <topology evidence="1 2">Single-pass type I membrane protein</topology>
    </subcellularLocation>
</comment>
<comment type="domain">
    <text evidence="1">The first fibronectin type-III domain mediates a specific interaction with Hh protein, in vitro. The second fibronectin type-III domain is additionally required for in vivo signaling activity (By similarity).</text>
</comment>
<comment type="similarity">
    <text evidence="2 6">Belongs to the immunoglobulin superfamily. IHOG family.</text>
</comment>
<proteinExistence type="inferred from homology"/>
<organism>
    <name type="scientific">Drosophila sechellia</name>
    <name type="common">Fruit fly</name>
    <dbReference type="NCBI Taxonomy" id="7238"/>
    <lineage>
        <taxon>Eukaryota</taxon>
        <taxon>Metazoa</taxon>
        <taxon>Ecdysozoa</taxon>
        <taxon>Arthropoda</taxon>
        <taxon>Hexapoda</taxon>
        <taxon>Insecta</taxon>
        <taxon>Pterygota</taxon>
        <taxon>Neoptera</taxon>
        <taxon>Endopterygota</taxon>
        <taxon>Diptera</taxon>
        <taxon>Brachycera</taxon>
        <taxon>Muscomorpha</taxon>
        <taxon>Ephydroidea</taxon>
        <taxon>Drosophilidae</taxon>
        <taxon>Drosophila</taxon>
        <taxon>Sophophora</taxon>
    </lineage>
</organism>
<reference evidence="7" key="1">
    <citation type="journal article" date="2007" name="Nature">
        <title>Evolution of genes and genomes on the Drosophila phylogeny.</title>
        <authorList>
            <consortium name="Drosophila 12 genomes consortium"/>
        </authorList>
    </citation>
    <scope>NUCLEOTIDE SEQUENCE [LARGE SCALE GENOMIC DNA]</scope>
    <source>
        <strain evidence="7">Rob3c / Tucson 14021-0248.25</strain>
    </source>
</reference>
<keyword id="KW-1015">Disulfide bond</keyword>
<keyword id="KW-0325">Glycoprotein</keyword>
<keyword id="KW-0358">Heparin-binding</keyword>
<keyword id="KW-0393">Immunoglobulin domain</keyword>
<keyword id="KW-0472">Membrane</keyword>
<keyword id="KW-0654">Proteoglycan</keyword>
<keyword id="KW-1185">Reference proteome</keyword>
<keyword id="KW-0677">Repeat</keyword>
<keyword id="KW-0732">Signal</keyword>
<keyword id="KW-0812">Transmembrane</keyword>
<keyword id="KW-1133">Transmembrane helix</keyword>
<gene>
    <name evidence="1" type="primary">iHog</name>
    <name type="ORF">GM13730</name>
</gene>
<feature type="signal peptide" evidence="2">
    <location>
        <begin position="1"/>
        <end position="20"/>
    </location>
</feature>
<feature type="chain" id="PRO_0000383619" description="Interference hedgehog" evidence="2">
    <location>
        <begin position="21"/>
        <end position="880"/>
    </location>
</feature>
<feature type="topological domain" description="Extracellular" evidence="2">
    <location>
        <begin position="21"/>
        <end position="703"/>
    </location>
</feature>
<feature type="transmembrane region" description="Helical" evidence="2">
    <location>
        <begin position="704"/>
        <end position="724"/>
    </location>
</feature>
<feature type="topological domain" description="Cytoplasmic" evidence="2">
    <location>
        <begin position="725"/>
        <end position="880"/>
    </location>
</feature>
<feature type="domain" description="Ig-like C2-type 1" evidence="2">
    <location>
        <begin position="45"/>
        <end position="142"/>
    </location>
</feature>
<feature type="domain" description="Ig-like C2-type 2" evidence="2">
    <location>
        <begin position="132"/>
        <end position="232"/>
    </location>
</feature>
<feature type="domain" description="Ig-like C2-type 3" evidence="2">
    <location>
        <begin position="252"/>
        <end position="340"/>
    </location>
</feature>
<feature type="domain" description="Ig-like C2-type 4" evidence="2">
    <location>
        <begin position="346"/>
        <end position="432"/>
    </location>
</feature>
<feature type="domain" description="Fibronectin type-III 1" evidence="4">
    <location>
        <begin position="461"/>
        <end position="567"/>
    </location>
</feature>
<feature type="domain" description="Fibronectin type-III 2" evidence="4">
    <location>
        <begin position="575"/>
        <end position="670"/>
    </location>
</feature>
<feature type="region of interest" description="Disordered" evidence="5">
    <location>
        <begin position="426"/>
        <end position="467"/>
    </location>
</feature>
<feature type="region of interest" description="Disordered" evidence="5">
    <location>
        <begin position="662"/>
        <end position="697"/>
    </location>
</feature>
<feature type="region of interest" description="Disordered" evidence="5">
    <location>
        <begin position="728"/>
        <end position="762"/>
    </location>
</feature>
<feature type="region of interest" description="Disordered" evidence="5">
    <location>
        <begin position="775"/>
        <end position="880"/>
    </location>
</feature>
<feature type="compositionally biased region" description="Polar residues" evidence="5">
    <location>
        <begin position="665"/>
        <end position="678"/>
    </location>
</feature>
<feature type="compositionally biased region" description="Polar residues" evidence="5">
    <location>
        <begin position="688"/>
        <end position="697"/>
    </location>
</feature>
<feature type="compositionally biased region" description="Low complexity" evidence="5">
    <location>
        <begin position="823"/>
        <end position="837"/>
    </location>
</feature>
<feature type="compositionally biased region" description="Low complexity" evidence="5">
    <location>
        <begin position="864"/>
        <end position="880"/>
    </location>
</feature>
<feature type="binding site" evidence="1">
    <location>
        <position position="497"/>
    </location>
    <ligand>
        <name>heparin</name>
        <dbReference type="ChEBI" id="CHEBI:28304"/>
    </ligand>
</feature>
<feature type="binding site" evidence="1">
    <location>
        <position position="501"/>
    </location>
    <ligand>
        <name>heparin</name>
        <dbReference type="ChEBI" id="CHEBI:28304"/>
    </ligand>
</feature>
<feature type="binding site" evidence="1">
    <location>
        <position position="503"/>
    </location>
    <ligand>
        <name>heparin</name>
        <dbReference type="ChEBI" id="CHEBI:28304"/>
    </ligand>
</feature>
<feature type="binding site" evidence="1">
    <location>
        <position position="541"/>
    </location>
    <ligand>
        <name>heparin</name>
        <dbReference type="ChEBI" id="CHEBI:28304"/>
    </ligand>
</feature>
<feature type="glycosylation site" description="N-linked (GlcNAc...) asparagine" evidence="2">
    <location>
        <position position="102"/>
    </location>
</feature>
<feature type="glycosylation site" description="N-linked (GlcNAc...) asparagine" evidence="2">
    <location>
        <position position="209"/>
    </location>
</feature>
<feature type="glycosylation site" description="N-linked (GlcNAc...) asparagine" evidence="2">
    <location>
        <position position="466"/>
    </location>
</feature>
<feature type="glycosylation site" description="N-linked (GlcNAc...) asparagine" evidence="2">
    <location>
        <position position="557"/>
    </location>
</feature>
<feature type="glycosylation site" description="N-linked (GlcNAc...) asparagine" evidence="2">
    <location>
        <position position="693"/>
    </location>
</feature>
<feature type="disulfide bond" evidence="3">
    <location>
        <begin position="68"/>
        <end position="126"/>
    </location>
</feature>
<feature type="disulfide bond" evidence="3">
    <location>
        <begin position="173"/>
        <end position="220"/>
    </location>
</feature>
<feature type="disulfide bond" evidence="3">
    <location>
        <begin position="276"/>
        <end position="324"/>
    </location>
</feature>
<feature type="disulfide bond" evidence="3">
    <location>
        <begin position="367"/>
        <end position="414"/>
    </location>
</feature>
<name>IHOG_DROSE</name>